<feature type="chain" id="PRO_0000407267" description="N(2)-fixation sustaining protein CowN">
    <location>
        <begin position="1"/>
        <end position="92"/>
    </location>
</feature>
<name>COWN_RHOPA</name>
<proteinExistence type="inferred from homology"/>
<evidence type="ECO:0000255" key="1">
    <source>
        <dbReference type="HAMAP-Rule" id="MF_02117"/>
    </source>
</evidence>
<protein>
    <recommendedName>
        <fullName evidence="1">N(2)-fixation sustaining protein CowN</fullName>
    </recommendedName>
    <alternativeName>
        <fullName evidence="1">CO weal-nitrogenase</fullName>
    </alternativeName>
</protein>
<gene>
    <name evidence="1" type="primary">cowN</name>
    <name type="ordered locus">RPA2156</name>
</gene>
<sequence length="92" mass="11016">MSASFDRYVSFQHCDWEGRSERVMQRLQRHVEAAENPFWAYFAQKRAELRDKQGLDDLRILHNYLPTLRELLEDNGDLETLEMLEDLEANLM</sequence>
<keyword id="KW-0535">Nitrogen fixation</keyword>
<dbReference type="EMBL" id="BX572599">
    <property type="protein sequence ID" value="CAE27597.1"/>
    <property type="molecule type" value="Genomic_DNA"/>
</dbReference>
<dbReference type="RefSeq" id="WP_011157711.1">
    <property type="nucleotide sequence ID" value="NZ_CP116810.1"/>
</dbReference>
<dbReference type="DNASU" id="2693284"/>
<dbReference type="GeneID" id="66893205"/>
<dbReference type="eggNOG" id="ENOG5032TZQ">
    <property type="taxonomic scope" value="Bacteria"/>
</dbReference>
<dbReference type="HOGENOM" id="CLU_149349_0_0_5"/>
<dbReference type="GO" id="GO:0009399">
    <property type="term" value="P:nitrogen fixation"/>
    <property type="evidence" value="ECO:0007669"/>
    <property type="project" value="UniProtKB-UniRule"/>
</dbReference>
<dbReference type="HAMAP" id="MF_02117">
    <property type="entry name" value="CowN"/>
    <property type="match status" value="1"/>
</dbReference>
<dbReference type="InterPro" id="IPR024899">
    <property type="entry name" value="CowN"/>
</dbReference>
<dbReference type="NCBIfam" id="NF033689">
    <property type="entry name" value="N2Fix_CO_CowN"/>
    <property type="match status" value="1"/>
</dbReference>
<dbReference type="Pfam" id="PF20543">
    <property type="entry name" value="CowN"/>
    <property type="match status" value="1"/>
</dbReference>
<organism>
    <name type="scientific">Rhodopseudomonas palustris (strain ATCC BAA-98 / CGA009)</name>
    <dbReference type="NCBI Taxonomy" id="258594"/>
    <lineage>
        <taxon>Bacteria</taxon>
        <taxon>Pseudomonadati</taxon>
        <taxon>Pseudomonadota</taxon>
        <taxon>Alphaproteobacteria</taxon>
        <taxon>Hyphomicrobiales</taxon>
        <taxon>Nitrobacteraceae</taxon>
        <taxon>Rhodopseudomonas</taxon>
    </lineage>
</organism>
<reference key="1">
    <citation type="journal article" date="2004" name="Nat. Biotechnol.">
        <title>Complete genome sequence of the metabolically versatile photosynthetic bacterium Rhodopseudomonas palustris.</title>
        <authorList>
            <person name="Larimer F.W."/>
            <person name="Chain P."/>
            <person name="Hauser L."/>
            <person name="Lamerdin J.E."/>
            <person name="Malfatti S."/>
            <person name="Do L."/>
            <person name="Land M.L."/>
            <person name="Pelletier D.A."/>
            <person name="Beatty J.T."/>
            <person name="Lang A.S."/>
            <person name="Tabita F.R."/>
            <person name="Gibson J.L."/>
            <person name="Hanson T.E."/>
            <person name="Bobst C."/>
            <person name="Torres y Torres J.L."/>
            <person name="Peres C."/>
            <person name="Harrison F.H."/>
            <person name="Gibson J."/>
            <person name="Harwood C.S."/>
        </authorList>
    </citation>
    <scope>NUCLEOTIDE SEQUENCE [LARGE SCALE GENOMIC DNA]</scope>
    <source>
        <strain>ATCC BAA-98 / CGA009</strain>
    </source>
</reference>
<comment type="function">
    <text evidence="1">Is required to sustain N(2)-dependent growth in the presence of low levels of carbon monoxide (CO). Probably acts by protecting the N(2) fixation ability of the nitrogenase complex, which is inactivated in the presence of CO.</text>
</comment>
<comment type="similarity">
    <text evidence="1">Belongs to the CowN family.</text>
</comment>
<accession>Q6N7U8</accession>